<proteinExistence type="evidence at protein level"/>
<name>COX24_NEUCR</name>
<dbReference type="EMBL" id="CM002236">
    <property type="protein sequence ID" value="EAA36443.1"/>
    <property type="molecule type" value="Genomic_DNA"/>
</dbReference>
<dbReference type="RefSeq" id="XP_965679.1">
    <property type="nucleotide sequence ID" value="XM_960586.3"/>
</dbReference>
<dbReference type="PDB" id="6YW5">
    <property type="method" value="EM"/>
    <property type="resolution" value="2.85 A"/>
    <property type="chains" value="22=1-344"/>
</dbReference>
<dbReference type="PDB" id="6YWE">
    <property type="method" value="EM"/>
    <property type="resolution" value="2.99 A"/>
    <property type="chains" value="22=1-344"/>
</dbReference>
<dbReference type="PDB" id="6YWX">
    <property type="method" value="EM"/>
    <property type="resolution" value="3.10 A"/>
    <property type="chains" value="22=1-344"/>
</dbReference>
<dbReference type="PDB" id="6YWY">
    <property type="method" value="EM"/>
    <property type="resolution" value="3.05 A"/>
    <property type="chains" value="22=1-344"/>
</dbReference>
<dbReference type="PDBsum" id="6YW5"/>
<dbReference type="PDBsum" id="6YWE"/>
<dbReference type="PDBsum" id="6YWX"/>
<dbReference type="PDBsum" id="6YWY"/>
<dbReference type="EMDB" id="EMD-10958"/>
<dbReference type="EMDB" id="EMD-10965"/>
<dbReference type="EMDB" id="EMD-10978"/>
<dbReference type="EMDB" id="EMD-10985"/>
<dbReference type="SMR" id="Q7SHR6"/>
<dbReference type="STRING" id="367110.Q7SHR6"/>
<dbReference type="PaxDb" id="5141-EFNCRP00000001970"/>
<dbReference type="EnsemblFungi" id="EAA36443">
    <property type="protein sequence ID" value="EAA36443"/>
    <property type="gene ID" value="NCU02548"/>
</dbReference>
<dbReference type="GeneID" id="3881829"/>
<dbReference type="KEGG" id="ncr:NCU02548"/>
<dbReference type="VEuPathDB" id="FungiDB:NCU02548"/>
<dbReference type="HOGENOM" id="CLU_035429_0_1_1"/>
<dbReference type="InParanoid" id="Q7SHR6"/>
<dbReference type="OrthoDB" id="5364404at2759"/>
<dbReference type="Proteomes" id="UP000001805">
    <property type="component" value="Chromosome 1, Linkage Group I"/>
</dbReference>
<dbReference type="GO" id="GO:0005739">
    <property type="term" value="C:mitochondrion"/>
    <property type="evidence" value="ECO:0000318"/>
    <property type="project" value="GO_Central"/>
</dbReference>
<dbReference type="GO" id="GO:0045862">
    <property type="term" value="P:positive regulation of proteolysis"/>
    <property type="evidence" value="ECO:0000318"/>
    <property type="project" value="GO_Central"/>
</dbReference>
<dbReference type="InterPro" id="IPR013177">
    <property type="entry name" value="Ribosomal_mS38_C"/>
</dbReference>
<dbReference type="PANTHER" id="PTHR32035">
    <property type="entry name" value="AURORA KINASE A-INTERACTING PROTEIN"/>
    <property type="match status" value="1"/>
</dbReference>
<dbReference type="PANTHER" id="PTHR32035:SF3">
    <property type="entry name" value="SMALL RIBOSOMAL SUBUNIT PROTEIN MS38"/>
    <property type="match status" value="1"/>
</dbReference>
<dbReference type="Pfam" id="PF08213">
    <property type="entry name" value="COX24_C"/>
    <property type="match status" value="1"/>
</dbReference>
<dbReference type="SMART" id="SM01155">
    <property type="entry name" value="DUF1713"/>
    <property type="match status" value="1"/>
</dbReference>
<comment type="function">
    <text evidence="5">Component of the mitochondrial ribosome (mitoribosome), a dedicated translation machinery responsible for the synthesis of mitochondrial genome-encoded proteins, including at least some of the essential transmembrane subunits of the mitochondrial respiratory chain. The mitoribosomes are attached to the mitochondrial inner membrane and translation products are cotranslationally integrated into the membrane.</text>
</comment>
<comment type="subunit">
    <text evidence="2">Component of the mitochondrial small ribosomal subunit (mt-SSU). Mature N.crassa 74S mitochondrial ribosomes consist of a small (37S) and a large (54S) subunit. The 37S small subunit contains a 16S ribosomal RNA (16S mt-rRNA) and 32 different proteins. The 54S large subunit contains a 23S rRNA (23S mt-rRNA) and 42 different proteins.</text>
</comment>
<comment type="subcellular location">
    <subcellularLocation>
        <location evidence="2">Mitochondrion</location>
    </subcellularLocation>
</comment>
<comment type="similarity">
    <text evidence="4">Belongs to the mitochondrion-specific ribosomal protein mS38 family.</text>
</comment>
<sequence length="344" mass="38064">MIPQSVRRVVAAAPQSPVVSSLAASSAPRAGASYILSSYQPNALQKRRYSSSKPSSPDDGSSRAFAARASVPAAGTSKTPGEKRKRKAKEPVMPPLPSVPSTRHIKDEALALSTFFALHRPISVTQLLPKTVTEESFAEIFNHRKGHKATDVLSTLSQAVHDLESPMSGLRLSDNDVEDGSTKISLKHPDGTESDVYFQLNSMSGHFLPFNPPPPPEPIAEVDEAAAEAEASAAIAEEIAATAEQEPETRVYKAVVTIEETRDTNGQYKIMAHSPQLVEDDAVQPRSFLERLALRQIRYEEARQQQGIMHAISVRRQKKLKIKKKKYKKLMRRTRNERRKQDRL</sequence>
<gene>
    <name type="primary">cox24</name>
    <name type="ORF">NCU02548</name>
</gene>
<feature type="chain" id="PRO_0000458583" description="Small ribosomal subunit protein mS38">
    <location>
        <begin position="1"/>
        <end position="344"/>
    </location>
</feature>
<feature type="region of interest" description="Disordered" evidence="1">
    <location>
        <begin position="1"/>
        <end position="27"/>
    </location>
</feature>
<feature type="region of interest" description="Disordered" evidence="1">
    <location>
        <begin position="43"/>
        <end position="101"/>
    </location>
</feature>
<feature type="region of interest" description="Disordered" evidence="1">
    <location>
        <begin position="325"/>
        <end position="344"/>
    </location>
</feature>
<feature type="compositionally biased region" description="Low complexity" evidence="1">
    <location>
        <begin position="51"/>
        <end position="74"/>
    </location>
</feature>
<feature type="compositionally biased region" description="Basic residues" evidence="1">
    <location>
        <begin position="325"/>
        <end position="338"/>
    </location>
</feature>
<accession>Q7SHR6</accession>
<evidence type="ECO:0000256" key="1">
    <source>
        <dbReference type="SAM" id="MobiDB-lite"/>
    </source>
</evidence>
<evidence type="ECO:0000269" key="2">
    <source>
    </source>
</evidence>
<evidence type="ECO:0000303" key="3">
    <source>
    </source>
</evidence>
<evidence type="ECO:0000305" key="4"/>
<evidence type="ECO:0000305" key="5">
    <source>
    </source>
</evidence>
<evidence type="ECO:0007744" key="6">
    <source>
        <dbReference type="PDB" id="6YW5"/>
    </source>
</evidence>
<evidence type="ECO:0007744" key="7">
    <source>
        <dbReference type="PDB" id="6YWE"/>
    </source>
</evidence>
<organism>
    <name type="scientific">Neurospora crassa (strain ATCC 24698 / 74-OR23-1A / CBS 708.71 / DSM 1257 / FGSC 987)</name>
    <dbReference type="NCBI Taxonomy" id="367110"/>
    <lineage>
        <taxon>Eukaryota</taxon>
        <taxon>Fungi</taxon>
        <taxon>Dikarya</taxon>
        <taxon>Ascomycota</taxon>
        <taxon>Pezizomycotina</taxon>
        <taxon>Sordariomycetes</taxon>
        <taxon>Sordariomycetidae</taxon>
        <taxon>Sordariales</taxon>
        <taxon>Sordariaceae</taxon>
        <taxon>Neurospora</taxon>
    </lineage>
</organism>
<reference key="1">
    <citation type="journal article" date="2003" name="Nature">
        <title>The genome sequence of the filamentous fungus Neurospora crassa.</title>
        <authorList>
            <person name="Galagan J.E."/>
            <person name="Calvo S.E."/>
            <person name="Borkovich K.A."/>
            <person name="Selker E.U."/>
            <person name="Read N.D."/>
            <person name="Jaffe D.B."/>
            <person name="FitzHugh W."/>
            <person name="Ma L.-J."/>
            <person name="Smirnov S."/>
            <person name="Purcell S."/>
            <person name="Rehman B."/>
            <person name="Elkins T."/>
            <person name="Engels R."/>
            <person name="Wang S."/>
            <person name="Nielsen C.B."/>
            <person name="Butler J."/>
            <person name="Endrizzi M."/>
            <person name="Qui D."/>
            <person name="Ianakiev P."/>
            <person name="Bell-Pedersen D."/>
            <person name="Nelson M.A."/>
            <person name="Werner-Washburne M."/>
            <person name="Selitrennikoff C.P."/>
            <person name="Kinsey J.A."/>
            <person name="Braun E.L."/>
            <person name="Zelter A."/>
            <person name="Schulte U."/>
            <person name="Kothe G.O."/>
            <person name="Jedd G."/>
            <person name="Mewes H.-W."/>
            <person name="Staben C."/>
            <person name="Marcotte E."/>
            <person name="Greenberg D."/>
            <person name="Roy A."/>
            <person name="Foley K."/>
            <person name="Naylor J."/>
            <person name="Stange-Thomann N."/>
            <person name="Barrett R."/>
            <person name="Gnerre S."/>
            <person name="Kamal M."/>
            <person name="Kamvysselis M."/>
            <person name="Mauceli E.W."/>
            <person name="Bielke C."/>
            <person name="Rudd S."/>
            <person name="Frishman D."/>
            <person name="Krystofova S."/>
            <person name="Rasmussen C."/>
            <person name="Metzenberg R.L."/>
            <person name="Perkins D.D."/>
            <person name="Kroken S."/>
            <person name="Cogoni C."/>
            <person name="Macino G."/>
            <person name="Catcheside D.E.A."/>
            <person name="Li W."/>
            <person name="Pratt R.J."/>
            <person name="Osmani S.A."/>
            <person name="DeSouza C.P.C."/>
            <person name="Glass N.L."/>
            <person name="Orbach M.J."/>
            <person name="Berglund J.A."/>
            <person name="Voelker R."/>
            <person name="Yarden O."/>
            <person name="Plamann M."/>
            <person name="Seiler S."/>
            <person name="Dunlap J.C."/>
            <person name="Radford A."/>
            <person name="Aramayo R."/>
            <person name="Natvig D.O."/>
            <person name="Alex L.A."/>
            <person name="Mannhaupt G."/>
            <person name="Ebbole D.J."/>
            <person name="Freitag M."/>
            <person name="Paulsen I."/>
            <person name="Sachs M.S."/>
            <person name="Lander E.S."/>
            <person name="Nusbaum C."/>
            <person name="Birren B.W."/>
        </authorList>
    </citation>
    <scope>NUCLEOTIDE SEQUENCE [LARGE SCALE GENOMIC DNA]</scope>
    <source>
        <strain>ATCC 24698 / 74-OR23-1A / CBS 708.71 / DSM 1257 / FGSC 987</strain>
    </source>
</reference>
<reference evidence="6 7" key="2">
    <citation type="journal article" date="2020" name="Nat. Commun.">
        <title>Analysis of translating mitoribosome reveals functional characteristics of translation in mitochondria of fungi.</title>
        <authorList>
            <person name="Itoh Y."/>
            <person name="Naschberger A."/>
            <person name="Mortezaei N."/>
            <person name="Herrmann J.M."/>
            <person name="Amunts A."/>
        </authorList>
    </citation>
    <scope>STRUCTURE BY ELECTRON MICROSCOPY (2.85 ANGSTROMS)</scope>
</reference>
<keyword id="KW-0002">3D-structure</keyword>
<keyword id="KW-0496">Mitochondrion</keyword>
<keyword id="KW-1185">Reference proteome</keyword>
<protein>
    <recommendedName>
        <fullName evidence="3">Small ribosomal subunit protein mS38</fullName>
    </recommendedName>
</protein>